<organismHost>
    <name type="scientific">Oryctolagus cuniculus</name>
    <name type="common">Rabbit</name>
    <dbReference type="NCBI Taxonomy" id="9986"/>
</organismHost>
<evidence type="ECO:0000250" key="1"/>
<evidence type="ECO:0000305" key="2"/>
<dbReference type="EMBL" id="AY484669">
    <property type="protein sequence ID" value="AAS49845.1"/>
    <property type="molecule type" value="Genomic_DNA"/>
</dbReference>
<dbReference type="SMR" id="Q6RZF9"/>
<dbReference type="Proteomes" id="UP000166173">
    <property type="component" value="Segment"/>
</dbReference>
<dbReference type="InterPro" id="IPR008789">
    <property type="entry name" value="Poxvirus_intermed-TF"/>
</dbReference>
<dbReference type="Pfam" id="PF05718">
    <property type="entry name" value="Pox_int_trans"/>
    <property type="match status" value="1"/>
</dbReference>
<protein>
    <recommendedName>
        <fullName>Intermediate transcription factor 3 large subunit</fullName>
    </recommendedName>
    <alternativeName>
        <fullName>VITF-3 45 kDa subunit</fullName>
    </alternativeName>
</protein>
<accession>Q6RZF9</accession>
<organism>
    <name type="scientific">Rabbitpox virus (strain Utrecht)</name>
    <name type="common">RPV</name>
    <dbReference type="NCBI Taxonomy" id="45417"/>
    <lineage>
        <taxon>Viruses</taxon>
        <taxon>Varidnaviria</taxon>
        <taxon>Bamfordvirae</taxon>
        <taxon>Nucleocytoviricota</taxon>
        <taxon>Pokkesviricetes</taxon>
        <taxon>Chitovirales</taxon>
        <taxon>Poxviridae</taxon>
        <taxon>Chordopoxvirinae</taxon>
        <taxon>Orthopoxvirus</taxon>
        <taxon>Vaccinia virus</taxon>
    </lineage>
</organism>
<feature type="chain" id="PRO_0000099189" description="Intermediate transcription factor 3 large subunit">
    <location>
        <begin position="1"/>
        <end position="382"/>
    </location>
</feature>
<keyword id="KW-0010">Activator</keyword>
<keyword id="KW-0804">Transcription</keyword>
<keyword id="KW-0805">Transcription regulation</keyword>
<name>VTF3L_RABPU</name>
<reference key="1">
    <citation type="journal article" date="2005" name="J. Gen. Virol.">
        <title>Complete coding sequences of the rabbitpox virus genome.</title>
        <authorList>
            <person name="Li G."/>
            <person name="Chen N."/>
            <person name="Roper R.L."/>
            <person name="Feng Z."/>
            <person name="Hunter A.L."/>
            <person name="Danila M."/>
            <person name="Lefkowitz E.J."/>
            <person name="Buller R.M.L."/>
            <person name="Upton C."/>
        </authorList>
    </citation>
    <scope>NUCLEOTIDE SEQUENCE [LARGE SCALE GENOMIC DNA]</scope>
</reference>
<comment type="function">
    <text evidence="1">Acts with RNA polymerase to initiate transcription from intermediate gene promoters.</text>
</comment>
<comment type="subunit">
    <text evidence="1">Heterodimer of a 45 kDa and a 32 kDa subunit.</text>
</comment>
<comment type="similarity">
    <text evidence="2">Belongs to the poxviruses A23 family.</text>
</comment>
<sequence>MDNLFTFLHEIEDRYARTIFNFHLISCDEIGDIYGLMKERISSEDMFDNIVYNKDIHHAIKKLVYCDIQLTKHIINQNTYPVFNDSSQVKCCHYFDINSDNSNISSRTVEIFEREKSSLVSYIKTTNKKRKVNYGEIKKTVHGGTNANYFSGKKSDEYLSTTVRSNINQPWIKTISKRMRVDIINHSIVTRGKSSILQTIEIIFTNRTCVKIFKDSTMHIILSKDKDEKGCIHMIDKLFYVYYNLFLLFEDIIQNEYFKEVANVVNHVLTATALDEKLFLIKKMAEHDVYGVSNFKIGMFNLTFIKSLDHTVFPSLLDEDSKIKFFKGKKLNIVALRSLEDCINYVTKSENMIEMMKERSTILNSIDIETESVDRLKELLLK</sequence>
<proteinExistence type="inferred from homology"/>
<gene>
    <name type="primary">VITF3L</name>
    <name type="ordered locus">RPXV132</name>
</gene>